<evidence type="ECO:0000255" key="1"/>
<evidence type="ECO:0000305" key="2"/>
<feature type="signal peptide" evidence="1">
    <location>
        <begin position="1"/>
        <end position="29"/>
    </location>
</feature>
<feature type="chain" id="PRO_0000353116" description="Protein FAM24A">
    <location>
        <begin position="30"/>
        <end position="98"/>
    </location>
</feature>
<proteinExistence type="inferred from homology"/>
<sequence length="98" mass="10857">MFDLRTKVMIGIASTLLIAAIMLITLVFCLYQKISKALKLAKEPECCIDPCKDPNEKIIRAKPIIAETCRNLPCCDDCSIYKDVGSLPPCYCVTNEGL</sequence>
<accession>Q8CF27</accession>
<keyword id="KW-1185">Reference proteome</keyword>
<keyword id="KW-0964">Secreted</keyword>
<keyword id="KW-0732">Signal</keyword>
<name>FA24A_MOUSE</name>
<dbReference type="EMBL" id="AK006815">
    <property type="protein sequence ID" value="BAC25153.1"/>
    <property type="molecule type" value="mRNA"/>
</dbReference>
<dbReference type="EMBL" id="CH466531">
    <property type="protein sequence ID" value="EDL17699.1"/>
    <property type="molecule type" value="Genomic_DNA"/>
</dbReference>
<dbReference type="EMBL" id="CH466531">
    <property type="protein sequence ID" value="EDL17700.1"/>
    <property type="molecule type" value="Genomic_DNA"/>
</dbReference>
<dbReference type="EMBL" id="BC048642">
    <property type="protein sequence ID" value="AAH48642.1"/>
    <property type="molecule type" value="mRNA"/>
</dbReference>
<dbReference type="CCDS" id="CCDS40158.1"/>
<dbReference type="RefSeq" id="NP_899095.1">
    <property type="nucleotide sequence ID" value="NM_183272.2"/>
</dbReference>
<dbReference type="SMR" id="Q8CF27"/>
<dbReference type="FunCoup" id="Q8CF27">
    <property type="interactions" value="2"/>
</dbReference>
<dbReference type="STRING" id="10090.ENSMUSP00000146929"/>
<dbReference type="PhosphoSitePlus" id="Q8CF27"/>
<dbReference type="SwissPalm" id="Q8CF27"/>
<dbReference type="PaxDb" id="10090-ENSMUSP00000081551"/>
<dbReference type="ProteomicsDB" id="275735"/>
<dbReference type="DNASU" id="68223"/>
<dbReference type="Ensembl" id="ENSMUST00000084505.5">
    <property type="protein sequence ID" value="ENSMUSP00000081551.5"/>
    <property type="gene ID" value="ENSMUSG00000030859.9"/>
</dbReference>
<dbReference type="Ensembl" id="ENSMUST00000207439.2">
    <property type="protein sequence ID" value="ENSMUSP00000146929.2"/>
    <property type="gene ID" value="ENSMUSG00000030859.9"/>
</dbReference>
<dbReference type="Ensembl" id="ENSMUST00000207784.2">
    <property type="protein sequence ID" value="ENSMUSP00000146579.2"/>
    <property type="gene ID" value="ENSMUSG00000030859.9"/>
</dbReference>
<dbReference type="GeneID" id="68223"/>
<dbReference type="KEGG" id="mmu:68223"/>
<dbReference type="UCSC" id="uc009kbe.1">
    <property type="organism name" value="mouse"/>
</dbReference>
<dbReference type="AGR" id="MGI:1915473"/>
<dbReference type="CTD" id="118670"/>
<dbReference type="MGI" id="MGI:1915473">
    <property type="gene designation" value="Fam24a"/>
</dbReference>
<dbReference type="VEuPathDB" id="HostDB:ENSMUSG00000030859"/>
<dbReference type="eggNOG" id="ENOG502TEP5">
    <property type="taxonomic scope" value="Eukaryota"/>
</dbReference>
<dbReference type="GeneTree" id="ENSGT00940000164044"/>
<dbReference type="HOGENOM" id="CLU_160106_0_0_1"/>
<dbReference type="InParanoid" id="Q8CF27"/>
<dbReference type="OMA" id="CLYFKIA"/>
<dbReference type="OrthoDB" id="9784605at2759"/>
<dbReference type="PhylomeDB" id="Q8CF27"/>
<dbReference type="TreeFam" id="TF338384"/>
<dbReference type="BioGRID-ORCS" id="68223">
    <property type="hits" value="3 hits in 78 CRISPR screens"/>
</dbReference>
<dbReference type="PRO" id="PR:Q8CF27"/>
<dbReference type="Proteomes" id="UP000000589">
    <property type="component" value="Chromosome 7"/>
</dbReference>
<dbReference type="RNAct" id="Q8CF27">
    <property type="molecule type" value="protein"/>
</dbReference>
<dbReference type="Bgee" id="ENSMUSG00000030859">
    <property type="expression patterns" value="Expressed in spermatid and 35 other cell types or tissues"/>
</dbReference>
<dbReference type="GO" id="GO:0005576">
    <property type="term" value="C:extracellular region"/>
    <property type="evidence" value="ECO:0007669"/>
    <property type="project" value="UniProtKB-SubCell"/>
</dbReference>
<dbReference type="InterPro" id="IPR028122">
    <property type="entry name" value="FAM24"/>
</dbReference>
<dbReference type="PANTHER" id="PTHR35860:SF1">
    <property type="entry name" value="PROTEIN FAM24A"/>
    <property type="match status" value="1"/>
</dbReference>
<dbReference type="PANTHER" id="PTHR35860">
    <property type="entry name" value="PROTEIN FAM24B"/>
    <property type="match status" value="1"/>
</dbReference>
<dbReference type="Pfam" id="PF15193">
    <property type="entry name" value="FAM24"/>
    <property type="match status" value="1"/>
</dbReference>
<reference key="1">
    <citation type="journal article" date="2005" name="Science">
        <title>The transcriptional landscape of the mammalian genome.</title>
        <authorList>
            <person name="Carninci P."/>
            <person name="Kasukawa T."/>
            <person name="Katayama S."/>
            <person name="Gough J."/>
            <person name="Frith M.C."/>
            <person name="Maeda N."/>
            <person name="Oyama R."/>
            <person name="Ravasi T."/>
            <person name="Lenhard B."/>
            <person name="Wells C."/>
            <person name="Kodzius R."/>
            <person name="Shimokawa K."/>
            <person name="Bajic V.B."/>
            <person name="Brenner S.E."/>
            <person name="Batalov S."/>
            <person name="Forrest A.R."/>
            <person name="Zavolan M."/>
            <person name="Davis M.J."/>
            <person name="Wilming L.G."/>
            <person name="Aidinis V."/>
            <person name="Allen J.E."/>
            <person name="Ambesi-Impiombato A."/>
            <person name="Apweiler R."/>
            <person name="Aturaliya R.N."/>
            <person name="Bailey T.L."/>
            <person name="Bansal M."/>
            <person name="Baxter L."/>
            <person name="Beisel K.W."/>
            <person name="Bersano T."/>
            <person name="Bono H."/>
            <person name="Chalk A.M."/>
            <person name="Chiu K.P."/>
            <person name="Choudhary V."/>
            <person name="Christoffels A."/>
            <person name="Clutterbuck D.R."/>
            <person name="Crowe M.L."/>
            <person name="Dalla E."/>
            <person name="Dalrymple B.P."/>
            <person name="de Bono B."/>
            <person name="Della Gatta G."/>
            <person name="di Bernardo D."/>
            <person name="Down T."/>
            <person name="Engstrom P."/>
            <person name="Fagiolini M."/>
            <person name="Faulkner G."/>
            <person name="Fletcher C.F."/>
            <person name="Fukushima T."/>
            <person name="Furuno M."/>
            <person name="Futaki S."/>
            <person name="Gariboldi M."/>
            <person name="Georgii-Hemming P."/>
            <person name="Gingeras T.R."/>
            <person name="Gojobori T."/>
            <person name="Green R.E."/>
            <person name="Gustincich S."/>
            <person name="Harbers M."/>
            <person name="Hayashi Y."/>
            <person name="Hensch T.K."/>
            <person name="Hirokawa N."/>
            <person name="Hill D."/>
            <person name="Huminiecki L."/>
            <person name="Iacono M."/>
            <person name="Ikeo K."/>
            <person name="Iwama A."/>
            <person name="Ishikawa T."/>
            <person name="Jakt M."/>
            <person name="Kanapin A."/>
            <person name="Katoh M."/>
            <person name="Kawasawa Y."/>
            <person name="Kelso J."/>
            <person name="Kitamura H."/>
            <person name="Kitano H."/>
            <person name="Kollias G."/>
            <person name="Krishnan S.P."/>
            <person name="Kruger A."/>
            <person name="Kummerfeld S.K."/>
            <person name="Kurochkin I.V."/>
            <person name="Lareau L.F."/>
            <person name="Lazarevic D."/>
            <person name="Lipovich L."/>
            <person name="Liu J."/>
            <person name="Liuni S."/>
            <person name="McWilliam S."/>
            <person name="Madan Babu M."/>
            <person name="Madera M."/>
            <person name="Marchionni L."/>
            <person name="Matsuda H."/>
            <person name="Matsuzawa S."/>
            <person name="Miki H."/>
            <person name="Mignone F."/>
            <person name="Miyake S."/>
            <person name="Morris K."/>
            <person name="Mottagui-Tabar S."/>
            <person name="Mulder N."/>
            <person name="Nakano N."/>
            <person name="Nakauchi H."/>
            <person name="Ng P."/>
            <person name="Nilsson R."/>
            <person name="Nishiguchi S."/>
            <person name="Nishikawa S."/>
            <person name="Nori F."/>
            <person name="Ohara O."/>
            <person name="Okazaki Y."/>
            <person name="Orlando V."/>
            <person name="Pang K.C."/>
            <person name="Pavan W.J."/>
            <person name="Pavesi G."/>
            <person name="Pesole G."/>
            <person name="Petrovsky N."/>
            <person name="Piazza S."/>
            <person name="Reed J."/>
            <person name="Reid J.F."/>
            <person name="Ring B.Z."/>
            <person name="Ringwald M."/>
            <person name="Rost B."/>
            <person name="Ruan Y."/>
            <person name="Salzberg S.L."/>
            <person name="Sandelin A."/>
            <person name="Schneider C."/>
            <person name="Schoenbach C."/>
            <person name="Sekiguchi K."/>
            <person name="Semple C.A."/>
            <person name="Seno S."/>
            <person name="Sessa L."/>
            <person name="Sheng Y."/>
            <person name="Shibata Y."/>
            <person name="Shimada H."/>
            <person name="Shimada K."/>
            <person name="Silva D."/>
            <person name="Sinclair B."/>
            <person name="Sperling S."/>
            <person name="Stupka E."/>
            <person name="Sugiura K."/>
            <person name="Sultana R."/>
            <person name="Takenaka Y."/>
            <person name="Taki K."/>
            <person name="Tammoja K."/>
            <person name="Tan S.L."/>
            <person name="Tang S."/>
            <person name="Taylor M.S."/>
            <person name="Tegner J."/>
            <person name="Teichmann S.A."/>
            <person name="Ueda H.R."/>
            <person name="van Nimwegen E."/>
            <person name="Verardo R."/>
            <person name="Wei C.L."/>
            <person name="Yagi K."/>
            <person name="Yamanishi H."/>
            <person name="Zabarovsky E."/>
            <person name="Zhu S."/>
            <person name="Zimmer A."/>
            <person name="Hide W."/>
            <person name="Bult C."/>
            <person name="Grimmond S.M."/>
            <person name="Teasdale R.D."/>
            <person name="Liu E.T."/>
            <person name="Brusic V."/>
            <person name="Quackenbush J."/>
            <person name="Wahlestedt C."/>
            <person name="Mattick J.S."/>
            <person name="Hume D.A."/>
            <person name="Kai C."/>
            <person name="Sasaki D."/>
            <person name="Tomaru Y."/>
            <person name="Fukuda S."/>
            <person name="Kanamori-Katayama M."/>
            <person name="Suzuki M."/>
            <person name="Aoki J."/>
            <person name="Arakawa T."/>
            <person name="Iida J."/>
            <person name="Imamura K."/>
            <person name="Itoh M."/>
            <person name="Kato T."/>
            <person name="Kawaji H."/>
            <person name="Kawagashira N."/>
            <person name="Kawashima T."/>
            <person name="Kojima M."/>
            <person name="Kondo S."/>
            <person name="Konno H."/>
            <person name="Nakano K."/>
            <person name="Ninomiya N."/>
            <person name="Nishio T."/>
            <person name="Okada M."/>
            <person name="Plessy C."/>
            <person name="Shibata K."/>
            <person name="Shiraki T."/>
            <person name="Suzuki S."/>
            <person name="Tagami M."/>
            <person name="Waki K."/>
            <person name="Watahiki A."/>
            <person name="Okamura-Oho Y."/>
            <person name="Suzuki H."/>
            <person name="Kawai J."/>
            <person name="Hayashizaki Y."/>
        </authorList>
    </citation>
    <scope>NUCLEOTIDE SEQUENCE [LARGE SCALE MRNA]</scope>
    <source>
        <strain>C57BL/6J</strain>
        <tissue>Testis</tissue>
    </source>
</reference>
<reference key="2">
    <citation type="submission" date="2005-07" db="EMBL/GenBank/DDBJ databases">
        <authorList>
            <person name="Mural R.J."/>
            <person name="Adams M.D."/>
            <person name="Myers E.W."/>
            <person name="Smith H.O."/>
            <person name="Venter J.C."/>
        </authorList>
    </citation>
    <scope>NUCLEOTIDE SEQUENCE [LARGE SCALE GENOMIC DNA]</scope>
</reference>
<reference key="3">
    <citation type="journal article" date="2004" name="Genome Res.">
        <title>The status, quality, and expansion of the NIH full-length cDNA project: the Mammalian Gene Collection (MGC).</title>
        <authorList>
            <consortium name="The MGC Project Team"/>
        </authorList>
    </citation>
    <scope>NUCLEOTIDE SEQUENCE [LARGE SCALE MRNA]</scope>
    <source>
        <tissue>Testis</tissue>
    </source>
</reference>
<comment type="subcellular location">
    <subcellularLocation>
        <location evidence="2">Secreted</location>
    </subcellularLocation>
</comment>
<comment type="similarity">
    <text evidence="2">Belongs to the FAM24 family.</text>
</comment>
<gene>
    <name type="primary">Fam24a</name>
</gene>
<protein>
    <recommendedName>
        <fullName>Protein FAM24A</fullName>
    </recommendedName>
</protein>
<organism>
    <name type="scientific">Mus musculus</name>
    <name type="common">Mouse</name>
    <dbReference type="NCBI Taxonomy" id="10090"/>
    <lineage>
        <taxon>Eukaryota</taxon>
        <taxon>Metazoa</taxon>
        <taxon>Chordata</taxon>
        <taxon>Craniata</taxon>
        <taxon>Vertebrata</taxon>
        <taxon>Euteleostomi</taxon>
        <taxon>Mammalia</taxon>
        <taxon>Eutheria</taxon>
        <taxon>Euarchontoglires</taxon>
        <taxon>Glires</taxon>
        <taxon>Rodentia</taxon>
        <taxon>Myomorpha</taxon>
        <taxon>Muroidea</taxon>
        <taxon>Muridae</taxon>
        <taxon>Murinae</taxon>
        <taxon>Mus</taxon>
        <taxon>Mus</taxon>
    </lineage>
</organism>